<proteinExistence type="evidence at protein level"/>
<gene>
    <name type="primary">Mical</name>
    <name type="ORF">CG33208</name>
</gene>
<comment type="function">
    <text evidence="8 11 12">Monooxygenase that promotes depolymerization of F-actin by mediating oxidation of specific methionine residues on actin. Acts by modifying actin subunits at 'Met-44' and 'Met-47' through the addition of oxygen to form methionine-sulfoxide, leading to promote actin filament disassembly and prevent repolymerization. Plays a key role in semaphorin-plexin repulsive axon guidance and cell morphological changes, probably via its ability to modify and regulate actin.</text>
</comment>
<comment type="catalytic activity">
    <reaction evidence="12">
        <text>L-methionyl-[F-actin] + NADPH + O2 + H(+) = L-methionyl-(R)-S-oxide-[F-actin] + NADP(+) + H2O</text>
        <dbReference type="Rhea" id="RHEA:51308"/>
        <dbReference type="Rhea" id="RHEA-COMP:12953"/>
        <dbReference type="Rhea" id="RHEA-COMP:12956"/>
        <dbReference type="ChEBI" id="CHEBI:15377"/>
        <dbReference type="ChEBI" id="CHEBI:15378"/>
        <dbReference type="ChEBI" id="CHEBI:15379"/>
        <dbReference type="ChEBI" id="CHEBI:16044"/>
        <dbReference type="ChEBI" id="CHEBI:45764"/>
        <dbReference type="ChEBI" id="CHEBI:57783"/>
        <dbReference type="ChEBI" id="CHEBI:58349"/>
        <dbReference type="EC" id="1.14.13.225"/>
    </reaction>
</comment>
<comment type="cofactor">
    <cofactor evidence="8 12">
        <name>FAD</name>
        <dbReference type="ChEBI" id="CHEBI:57692"/>
    </cofactor>
</comment>
<comment type="subunit">
    <text evidence="8">Interacts with plexA.</text>
</comment>
<comment type="subcellular location">
    <subcellularLocation>
        <location evidence="1">Cytoplasm</location>
    </subcellularLocation>
</comment>
<comment type="alternative products">
    <event type="alternative splicing"/>
    <isoform>
        <id>Q86BA1-1</id>
        <name>C</name>
        <name>D</name>
        <name>F</name>
        <name>G</name>
        <name>H</name>
        <sequence type="displayed"/>
    </isoform>
    <isoform>
        <id>Q86BA1-2</id>
        <name>E</name>
        <sequence type="described" ref="VSP_042614 VSP_042617"/>
    </isoform>
    <isoform>
        <id>Q86BA1-3</id>
        <name>B</name>
        <sequence type="described" ref="VSP_042617"/>
    </isoform>
    <isoform>
        <id>Q86BA1-4</id>
        <name>I</name>
        <sequence type="described" ref="VSP_042612 VSP_042613"/>
    </isoform>
    <isoform>
        <id>Q86BA1-5</id>
        <name>A</name>
        <sequence type="described" ref="VSP_042615 VSP_042616"/>
    </isoform>
</comment>
<comment type="tissue specificity">
    <text evidence="8">Present in neuronal cell bodies, along axons, and in growth cones. Appears in the nervous system at stage 13 and labels motor and CNS projections, and at later embryonic stages, it is present on axons that make up all motor axon pathways: the intersegmental nerve (ISN), the intersegmental nerves b and d (ISNb and ISNd), and the segmental nerves a and c (SNa and SNc). Also present in segment boundaries at the position of muscle attachment sites and at low levels in the lateral cluster of chordotonal organs (at protein level). Localizes to growing bristle tips in close proximity to the bristle cell membrane and at sites of bristle branching and actin localization. Localizes to growth cones.</text>
</comment>
<comment type="developmental stage">
    <text evidence="8">During early development (stages 7-8), expressed in the ventral neurogenic region and in many nonneuronal tissues (including developing mesoderm, cells surrounding the cephalic furrow and amnioproctodeal invagination, and in gut primordia). This nonneuronal expression is also seen later in embryonic development (stages 11-17), where it is expressed within the anterior and posterior midgut primordia, the visceral musculature, and weakly in somatic musculature. During axonal pathfinding (stage 13 onward), expressed within the developing brain and ventral nerve cord in most, if not all, CNS neurons. Not highly expressed in peripheral sensory neurons.</text>
</comment>
<comment type="induction">
    <text evidence="10">Directly regulated by Sox14 during pruning.</text>
</comment>
<comment type="disruption phenotype">
    <text evidence="8 11">Defects in motor neuron guidance, myofilament organization and bristle formation. Surviving adult flies show abnormally shaped bristle cell processes that are variously straight, thick, bent, twisted and/or had abnormal 'club-like' or blunt tips.</text>
</comment>
<comment type="similarity">
    <text evidence="17">Belongs to the Mical family.</text>
</comment>
<comment type="caution">
    <text evidence="2 3 12 13">The reaction mechanism is subject to discussion. Some work suggest MICAL enzymes directly oxidize actin methionine residues to produce methionine-(R)-S-oxide. Other publications suggest that the enzyme functions as a NADPH oxidase producing H(2)O(2) (EC 1.6.3.1) and that it is the produced H(2)O(2) that is responsible for the methionine-(R)-S-oxide production.</text>
</comment>
<organism>
    <name type="scientific">Drosophila melanogaster</name>
    <name type="common">Fruit fly</name>
    <dbReference type="NCBI Taxonomy" id="7227"/>
    <lineage>
        <taxon>Eukaryota</taxon>
        <taxon>Metazoa</taxon>
        <taxon>Ecdysozoa</taxon>
        <taxon>Arthropoda</taxon>
        <taxon>Hexapoda</taxon>
        <taxon>Insecta</taxon>
        <taxon>Pterygota</taxon>
        <taxon>Neoptera</taxon>
        <taxon>Endopterygota</taxon>
        <taxon>Diptera</taxon>
        <taxon>Brachycera</taxon>
        <taxon>Muscomorpha</taxon>
        <taxon>Ephydroidea</taxon>
        <taxon>Drosophilidae</taxon>
        <taxon>Drosophila</taxon>
        <taxon>Sophophora</taxon>
    </lineage>
</organism>
<dbReference type="EC" id="1.14.13.225" evidence="12"/>
<dbReference type="EMBL" id="AF520713">
    <property type="protein sequence ID" value="AAM55242.1"/>
    <property type="molecule type" value="mRNA"/>
</dbReference>
<dbReference type="EMBL" id="AF520714">
    <property type="protein sequence ID" value="AAM55243.1"/>
    <property type="molecule type" value="mRNA"/>
</dbReference>
<dbReference type="EMBL" id="AF520715">
    <property type="protein sequence ID" value="AAM55244.1"/>
    <property type="molecule type" value="mRNA"/>
</dbReference>
<dbReference type="EMBL" id="AE014297">
    <property type="protein sequence ID" value="AAF54478.2"/>
    <property type="molecule type" value="Genomic_DNA"/>
</dbReference>
<dbReference type="EMBL" id="AE014297">
    <property type="protein sequence ID" value="AAO41531.1"/>
    <property type="molecule type" value="Genomic_DNA"/>
</dbReference>
<dbReference type="EMBL" id="AE014297">
    <property type="protein sequence ID" value="AAO41532.1"/>
    <property type="molecule type" value="Genomic_DNA"/>
</dbReference>
<dbReference type="EMBL" id="AE014297">
    <property type="protein sequence ID" value="AAO41533.1"/>
    <property type="molecule type" value="Genomic_DNA"/>
</dbReference>
<dbReference type="EMBL" id="AE014297">
    <property type="protein sequence ID" value="AAO41534.1"/>
    <property type="molecule type" value="Genomic_DNA"/>
</dbReference>
<dbReference type="EMBL" id="AE014297">
    <property type="protein sequence ID" value="AAO41535.1"/>
    <property type="molecule type" value="Genomic_DNA"/>
</dbReference>
<dbReference type="EMBL" id="AE014297">
    <property type="protein sequence ID" value="AAO41536.1"/>
    <property type="molecule type" value="Genomic_DNA"/>
</dbReference>
<dbReference type="EMBL" id="AE014297">
    <property type="protein sequence ID" value="AAO41537.1"/>
    <property type="molecule type" value="Genomic_DNA"/>
</dbReference>
<dbReference type="EMBL" id="AE014297">
    <property type="protein sequence ID" value="ACL83491.1"/>
    <property type="molecule type" value="Genomic_DNA"/>
</dbReference>
<dbReference type="EMBL" id="AY118290">
    <property type="protein sequence ID" value="AAM48319.1"/>
    <property type="molecule type" value="mRNA"/>
</dbReference>
<dbReference type="EMBL" id="BT126186">
    <property type="protein sequence ID" value="AEA30989.1"/>
    <property type="molecule type" value="mRNA"/>
</dbReference>
<dbReference type="RefSeq" id="NP_001138032.1">
    <molecule id="Q86BA1-4"/>
    <property type="nucleotide sequence ID" value="NM_001144560.3"/>
</dbReference>
<dbReference type="RefSeq" id="NP_788620.1">
    <molecule id="Q86BA1-2"/>
    <property type="nucleotide sequence ID" value="NM_176443.2"/>
</dbReference>
<dbReference type="RefSeq" id="NP_788621.1">
    <molecule id="Q86BA1-3"/>
    <property type="nucleotide sequence ID" value="NM_176444.2"/>
</dbReference>
<dbReference type="RefSeq" id="NP_788622.1">
    <molecule id="Q86BA1-1"/>
    <property type="nucleotide sequence ID" value="NM_176445.2"/>
</dbReference>
<dbReference type="RefSeq" id="NP_788623.1">
    <molecule id="Q86BA1-1"/>
    <property type="nucleotide sequence ID" value="NM_176446.2"/>
</dbReference>
<dbReference type="RefSeq" id="NP_788624.1">
    <molecule id="Q86BA1-1"/>
    <property type="nucleotide sequence ID" value="NM_176447.2"/>
</dbReference>
<dbReference type="RefSeq" id="NP_788625.1">
    <molecule id="Q86BA1-1"/>
    <property type="nucleotide sequence ID" value="NM_176448.2"/>
</dbReference>
<dbReference type="RefSeq" id="NP_788626.2">
    <property type="nucleotide sequence ID" value="NM_176449.3"/>
</dbReference>
<dbReference type="RefSeq" id="NP_788627.1">
    <molecule id="Q86BA1-5"/>
    <property type="nucleotide sequence ID" value="NM_176450.1"/>
</dbReference>
<dbReference type="SMR" id="Q86BA1"/>
<dbReference type="BioGRID" id="66380">
    <property type="interactions" value="15"/>
</dbReference>
<dbReference type="DIP" id="DIP-61753N"/>
<dbReference type="FunCoup" id="Q86BA1">
    <property type="interactions" value="283"/>
</dbReference>
<dbReference type="IntAct" id="Q86BA1">
    <property type="interactions" value="23"/>
</dbReference>
<dbReference type="STRING" id="7227.FBpp0297564"/>
<dbReference type="GlyGen" id="Q86BA1">
    <property type="glycosylation" value="4 sites"/>
</dbReference>
<dbReference type="iPTMnet" id="Q86BA1"/>
<dbReference type="PaxDb" id="7227-FBpp0297564"/>
<dbReference type="DNASU" id="41225"/>
<dbReference type="EnsemblMetazoa" id="FBtr0082206">
    <molecule id="Q86BA1-5"/>
    <property type="protein sequence ID" value="FBpp0081684"/>
    <property type="gene ID" value="FBgn0053208"/>
</dbReference>
<dbReference type="EnsemblMetazoa" id="FBtr0082207">
    <molecule id="Q86BA1-3"/>
    <property type="protein sequence ID" value="FBpp0081685"/>
    <property type="gene ID" value="FBgn0053208"/>
</dbReference>
<dbReference type="EnsemblMetazoa" id="FBtr0082208">
    <molecule id="Q86BA1-2"/>
    <property type="protein sequence ID" value="FBpp0081686"/>
    <property type="gene ID" value="FBgn0053208"/>
</dbReference>
<dbReference type="EnsemblMetazoa" id="FBtr0082209">
    <molecule id="Q86BA1-1"/>
    <property type="protein sequence ID" value="FBpp0081687"/>
    <property type="gene ID" value="FBgn0053208"/>
</dbReference>
<dbReference type="EnsemblMetazoa" id="FBtr0082210">
    <molecule id="Q86BA1-1"/>
    <property type="protein sequence ID" value="FBpp0081688"/>
    <property type="gene ID" value="FBgn0053208"/>
</dbReference>
<dbReference type="EnsemblMetazoa" id="FBtr0082212">
    <molecule id="Q86BA1-1"/>
    <property type="protein sequence ID" value="FBpp0081690"/>
    <property type="gene ID" value="FBgn0053208"/>
</dbReference>
<dbReference type="EnsemblMetazoa" id="FBtr0082213">
    <molecule id="Q86BA1-1"/>
    <property type="protein sequence ID" value="FBpp0081691"/>
    <property type="gene ID" value="FBgn0053208"/>
</dbReference>
<dbReference type="EnsemblMetazoa" id="FBtr0273185">
    <molecule id="Q86BA1-4"/>
    <property type="protein sequence ID" value="FBpp0271693"/>
    <property type="gene ID" value="FBgn0053208"/>
</dbReference>
<dbReference type="GeneID" id="41225"/>
<dbReference type="KEGG" id="dme:Dmel_CG33208"/>
<dbReference type="UCSC" id="CG33208-RA">
    <property type="organism name" value="d. melanogaster"/>
</dbReference>
<dbReference type="UCSC" id="CG33208-RB">
    <property type="organism name" value="d. melanogaster"/>
</dbReference>
<dbReference type="UCSC" id="CG33208-RC">
    <molecule id="Q86BA1-1"/>
    <property type="organism name" value="d. melanogaster"/>
</dbReference>
<dbReference type="UCSC" id="CG33208-RE">
    <property type="organism name" value="d. melanogaster"/>
</dbReference>
<dbReference type="AGR" id="FB:FBgn0053208"/>
<dbReference type="CTD" id="41225"/>
<dbReference type="FlyBase" id="FBgn0053208">
    <property type="gene designation" value="Mical"/>
</dbReference>
<dbReference type="VEuPathDB" id="VectorBase:FBgn0053208"/>
<dbReference type="eggNOG" id="KOG1700">
    <property type="taxonomic scope" value="Eukaryota"/>
</dbReference>
<dbReference type="InParanoid" id="Q86BA1"/>
<dbReference type="OrthoDB" id="20799at2759"/>
<dbReference type="BRENDA" id="1.14.13.225">
    <property type="organism ID" value="1994"/>
</dbReference>
<dbReference type="SignaLink" id="Q86BA1"/>
<dbReference type="BioGRID-ORCS" id="41225">
    <property type="hits" value="0 hits in 3 CRISPR screens"/>
</dbReference>
<dbReference type="ChiTaRS" id="Mical">
    <property type="organism name" value="fly"/>
</dbReference>
<dbReference type="GenomeRNAi" id="41225"/>
<dbReference type="PRO" id="PR:Q86BA1"/>
<dbReference type="Proteomes" id="UP000000803">
    <property type="component" value="Chromosome 3R"/>
</dbReference>
<dbReference type="Bgee" id="FBgn0053208">
    <property type="expression patterns" value="Expressed in muscle cell in body wall and 234 other cell types or tissues"/>
</dbReference>
<dbReference type="ExpressionAtlas" id="Q86BA1">
    <property type="expression patterns" value="baseline and differential"/>
</dbReference>
<dbReference type="GO" id="GO:0005829">
    <property type="term" value="C:cytosol"/>
    <property type="evidence" value="ECO:0000303"/>
    <property type="project" value="FlyBase"/>
</dbReference>
<dbReference type="GO" id="GO:0043195">
    <property type="term" value="C:terminal bouton"/>
    <property type="evidence" value="ECO:0000314"/>
    <property type="project" value="FlyBase"/>
</dbReference>
<dbReference type="GO" id="GO:0003779">
    <property type="term" value="F:actin binding"/>
    <property type="evidence" value="ECO:0000314"/>
    <property type="project" value="UniProtKB"/>
</dbReference>
<dbReference type="GO" id="GO:0120501">
    <property type="term" value="F:F-actin monooxygenase activity"/>
    <property type="evidence" value="ECO:0000314"/>
    <property type="project" value="UniProtKB"/>
</dbReference>
<dbReference type="GO" id="GO:0071949">
    <property type="term" value="F:FAD binding"/>
    <property type="evidence" value="ECO:0000314"/>
    <property type="project" value="UniProtKB"/>
</dbReference>
<dbReference type="GO" id="GO:0046872">
    <property type="term" value="F:metal ion binding"/>
    <property type="evidence" value="ECO:0007669"/>
    <property type="project" value="UniProtKB-KW"/>
</dbReference>
<dbReference type="GO" id="GO:0030042">
    <property type="term" value="P:actin filament depolymerization"/>
    <property type="evidence" value="ECO:0000314"/>
    <property type="project" value="UniProtKB"/>
</dbReference>
<dbReference type="GO" id="GO:0007015">
    <property type="term" value="P:actin filament organization"/>
    <property type="evidence" value="ECO:0000315"/>
    <property type="project" value="FlyBase"/>
</dbReference>
<dbReference type="GO" id="GO:0030047">
    <property type="term" value="P:actin modification"/>
    <property type="evidence" value="ECO:0000314"/>
    <property type="project" value="UniProtKB"/>
</dbReference>
<dbReference type="GO" id="GO:0007411">
    <property type="term" value="P:axon guidance"/>
    <property type="evidence" value="ECO:0000315"/>
    <property type="project" value="UniProtKB"/>
</dbReference>
<dbReference type="GO" id="GO:0048813">
    <property type="term" value="P:dendrite morphogenesis"/>
    <property type="evidence" value="ECO:0000315"/>
    <property type="project" value="FlyBase"/>
</dbReference>
<dbReference type="GO" id="GO:0016322">
    <property type="term" value="P:neuron remodeling"/>
    <property type="evidence" value="ECO:0000315"/>
    <property type="project" value="FlyBase"/>
</dbReference>
<dbReference type="GO" id="GO:1904799">
    <property type="term" value="P:regulation of neuron remodeling"/>
    <property type="evidence" value="ECO:0000315"/>
    <property type="project" value="FlyBase"/>
</dbReference>
<dbReference type="GO" id="GO:0045214">
    <property type="term" value="P:sarcomere organization"/>
    <property type="evidence" value="ECO:0000315"/>
    <property type="project" value="FlyBase"/>
</dbReference>
<dbReference type="GO" id="GO:0060386">
    <property type="term" value="P:synapse assembly involved in innervation"/>
    <property type="evidence" value="ECO:0000315"/>
    <property type="project" value="FlyBase"/>
</dbReference>
<dbReference type="CDD" id="cd09439">
    <property type="entry name" value="LIM_Mical"/>
    <property type="match status" value="1"/>
</dbReference>
<dbReference type="FunFam" id="1.10.418.10:FF:000085">
    <property type="entry name" value="protein-methionine sulfoxide oxidase Mical isoform X3"/>
    <property type="match status" value="1"/>
</dbReference>
<dbReference type="FunFam" id="2.10.110.10:FF:000118">
    <property type="entry name" value="protein-methionine sulfoxide oxidase Mical isoform X4"/>
    <property type="match status" value="1"/>
</dbReference>
<dbReference type="FunFam" id="3.50.50.60:FF:000004">
    <property type="entry name" value="protein-methionine sulfoxide oxidase MICAL2 isoform X1"/>
    <property type="match status" value="1"/>
</dbReference>
<dbReference type="Gene3D" id="1.10.418.10">
    <property type="entry name" value="Calponin-like domain"/>
    <property type="match status" value="1"/>
</dbReference>
<dbReference type="Gene3D" id="2.10.110.10">
    <property type="entry name" value="Cysteine Rich Protein"/>
    <property type="match status" value="1"/>
</dbReference>
<dbReference type="Gene3D" id="3.50.50.60">
    <property type="entry name" value="FAD/NAD(P)-binding domain"/>
    <property type="match status" value="1"/>
</dbReference>
<dbReference type="InterPro" id="IPR022735">
    <property type="entry name" value="bMERB_dom"/>
</dbReference>
<dbReference type="InterPro" id="IPR001715">
    <property type="entry name" value="CH_dom"/>
</dbReference>
<dbReference type="InterPro" id="IPR036872">
    <property type="entry name" value="CH_dom_sf"/>
</dbReference>
<dbReference type="InterPro" id="IPR050540">
    <property type="entry name" value="F-actin_Monoox_Mical"/>
</dbReference>
<dbReference type="InterPro" id="IPR036188">
    <property type="entry name" value="FAD/NAD-bd_sf"/>
</dbReference>
<dbReference type="InterPro" id="IPR001781">
    <property type="entry name" value="Znf_LIM"/>
</dbReference>
<dbReference type="PANTHER" id="PTHR23167:SF54">
    <property type="entry name" value="[F-ACTIN]-MONOOXYGENASE MICAL"/>
    <property type="match status" value="1"/>
</dbReference>
<dbReference type="PANTHER" id="PTHR23167">
    <property type="entry name" value="CALPONIN HOMOLOGY DOMAIN-CONTAINING PROTEIN DDB_G0272472-RELATED"/>
    <property type="match status" value="1"/>
</dbReference>
<dbReference type="Pfam" id="PF12130">
    <property type="entry name" value="bMERB_dom"/>
    <property type="match status" value="1"/>
</dbReference>
<dbReference type="Pfam" id="PF00307">
    <property type="entry name" value="CH"/>
    <property type="match status" value="1"/>
</dbReference>
<dbReference type="Pfam" id="PF00412">
    <property type="entry name" value="LIM"/>
    <property type="match status" value="1"/>
</dbReference>
<dbReference type="Pfam" id="PF25413">
    <property type="entry name" value="Rossman_Mical"/>
    <property type="match status" value="1"/>
</dbReference>
<dbReference type="SMART" id="SM01203">
    <property type="entry name" value="DUF3585"/>
    <property type="match status" value="1"/>
</dbReference>
<dbReference type="SMART" id="SM00132">
    <property type="entry name" value="LIM"/>
    <property type="match status" value="1"/>
</dbReference>
<dbReference type="SUPFAM" id="SSF47576">
    <property type="entry name" value="Calponin-homology domain, CH-domain"/>
    <property type="match status" value="1"/>
</dbReference>
<dbReference type="SUPFAM" id="SSF51905">
    <property type="entry name" value="FAD/NAD(P)-binding domain"/>
    <property type="match status" value="1"/>
</dbReference>
<dbReference type="SUPFAM" id="SSF57716">
    <property type="entry name" value="Glucocorticoid receptor-like (DNA-binding domain)"/>
    <property type="match status" value="1"/>
</dbReference>
<dbReference type="PROSITE" id="PS51848">
    <property type="entry name" value="BMERB"/>
    <property type="match status" value="1"/>
</dbReference>
<dbReference type="PROSITE" id="PS50021">
    <property type="entry name" value="CH"/>
    <property type="match status" value="1"/>
</dbReference>
<dbReference type="PROSITE" id="PS50023">
    <property type="entry name" value="LIM_DOMAIN_2"/>
    <property type="match status" value="1"/>
</dbReference>
<name>MICAL_DROME</name>
<sequence length="4723" mass="525047">MSRQHQRHHQQHHHLPPHQQPQQQMPQQQQQLTAQQQQQQQLLMAEHAAAAEAAELFDLLCVATTMRQILALHRAMCEAVGLRPSPLNDFYPRLKAKVRSWKAQALWKKFDARAAHRVYGKGAACTGTRVLVIGAGPCGLRTAIEAQLLGAKVVVLEKRDRITRNNVLHLWPFVITDLRNLGAKKFYGKFCAGSIDHISIRQLQCMLLKVALLLGVEIHEGVSFDHAVEPSGDGGGWRAAVTPADHPVSHYEFDVLIGADGKRNMLDFRRKEFRGKLAIAITANFINKKTEAEAKVEEISGVAFIFNQAFFKELYGKTGIDLENIVYYKDETHYFVMTAKKHSLIDKGVIIEDMADPGELLAPANVDTQKLHDYAREAAEFSTQYQMPNLEFAVNHYGKPDVAMFDFTSMFAAEMSCRVIVRKGARLMQCLVGDSLLEPFWPTGSGCARGFLSSMDAAYAIKLWSNPQNSTLGVLAQRESIYRLLNQTTPDTLQRDISAYTVDPATRYPNLNRESVNSWQVKHLVDTDDPSILEQTFMDTHALQTPHLDTPGRRKRRSGDLLPQGATLLRWISAQLHSYQFIPELKEASDVFRNGRVLCALINRYRPDLIDYAATKDMSPVECNELSFAVLERELHIDRVMSAKQSLDLTELESRIWLNYLDQICDLFRGEIPHIKHPKMDFSDLRQKYRINHTHAQPDFSKLLATKPKAKSPMQDAVDIPTTVQRRSVLEEERAKRQRRHEQLLNIGGGAAGAAAGVAGSGTGTTTQGQNDTPRRSKKRRQVDKTANIEERQQRLQEIEENRQERMSKRRQQRYHQTQNFYKSLQLLQAGKLLREGGEAGVAEDGTPFEDYSIFLYRQQAPVFNDRVKDLERKLLFPDRERGDIPSALPRTADEQFSDRIKNMEQRMTGRGGLGGDKKPKDLMRAIGKIDSNDWNVREIEKKIELSKKTEIHGPKGREKVPKWSKEQFQARQHKMSKPQRQDSREAEKFKDIDQTIRNLDKQLKEGHNLDVGERGRNKVASIAGQFGKKDEANSDEKNAGSSNATTNTNNTVIPKSSSKVALAFKKQAASEKCRFCKQTVYLMEKTTVEGLVLHRNCLKCHHCHTNLRLGGYAFDRDDPQGRFYCTQHFRLPPKPLPQRTNKARKSAAAQPASPAVPPTAGSVPTAAATSEHMDTTPPRDQVDLLETSRANASADAMSDDEANVIDEHEWSGRNFLPESNNDSQSELSSSDESDTESDSEMFEEADDSPFGAQTLQLASDWIGKQYCEDSDDSDDFYDSSEGIADDGKDDTEGEEFKKARELRRQEVRLQPLPANLPTDTETEKLKLNVDNKENMADRSSLKSGNSFESARSQPSTPLSTPTRVEMEQLERNAPRKFSSEIEAISEKLYHMNNMVKMNKDLEVLAKENLVKSDILRKLTLKEKWLAENAAIAAGQKVTPTPSATAPGLQPKSKFDEKFEKVVSPPQPVVEPKPKPVIDFNLDELKPRKPNFEERPKEQLPRPESLKKPPQQKPKGSSTNVSRSNSLKSNASNGSPKVKKAPISNNSKMQIEGILGTLRKIQSQNSSDQDEDMDVDEDVERKPNKELNSKLKEIQASSFAGTMDHIKSQLTMPTVSAQAPPSMDLSKYFPNQKQEKSSTSSTNKNQVTLKDVNLAKYFPSSPAPQRRTVETVADRLKKSQTEAALAKTKLLEDQANNQAEKTKKEVEKEGESKKITKKVADSKAVPPKRQASLDTFSLREHQMDGALDLTKKKGPTKASAGVKKPAKSGSTTSVTKATATSKGKTIKIVKKIVPKGTKAKKAAEAAQESAVVEAPPEKKPPKDEAERILDEILGDGEYRSPSSEYQRLFQDEKSPSDLSDNIDRILEESGLDVELGLPKRSSKKLVKTKSLGEGDFDMKPSKERLTGVQNILKRFESMSSVTSQNSDEQAAFKLRRMESTTSNLSSLTRSRESLVSVSDSMSDLEKTMDYLRNEWRNEATNFLQKKRDKFYAKKEEQEKESKILAKPDPLDNLPVQYRDSKLAKFFGLAASKSPENRKSPIKKKKSPSKTPKVTKANNSLEELAKISNVRQTKKAQPKTLKPVEVKPLKPASPVPDDFEILDLLEKATEAKELERSKTKSPAVESISQTPKEAIVEISLPVEDIKNLPKTGCDKSSNSSRRGSQSSLIMSRRHSEISLNEKLNQDALAALNQIEKEREAEQVDELFQSMVEEMEQEPQPTAIVEPPEEDIDADSLCTTISKSPSAQPVTVVKRGSSEDQSIEKLFSHFSDEMLVNVEFDSNDELVGITPRATLVSRNTEDRDYLDKLESLERDEETFQPVVGEKFIQENVQDEVDGLHFPSRPQRRPKSSSSSSEPSLPVAPQRLKKKLSKLDPEDMPPSVQDLLQQVYQKNIQPELVEVIPVEGKQTLRFPSMLAEEDVDEVDHSKEGIKKIETAPEEVRKVTEPEDVARVIPSPIKPSISQSNSLKSENSSGSSLVEIPKIITPPKSSSKENSSDWDMEKLPASPMPRRRLLPNQTPYKAPSVASKESSLEWDMEKLPNSPMLPRRNKMRAISPSTNPVQLLNNLPSDVDDEAAQRRLIEDFEQERRQALIKRDENFEAIAAEQRRRDSLQSSSNSSSKRSLPPPTPPMMASRRGTTQDTNRTQDTASRHEGTPPMFKKLDVDGSGTSMDSTSCSTRRSSFAFIELQDNKPVIVPMPKKLKLPKPEPPRFVPEPVATDEPVPEVFQGRAWPKTQLEGEVDLGDSDNEDETEKLKKQLPEYARSDSPPSAAFKNRKWPDGKTVFDKRAESLEEEDIFEGLLSPRKRGSQRFMDKPRSQSPQPFKPLANSSRKSSKSFSDLKKGPSLQSLSAQSSQDTDTLSTTTTVATARPASYANYEDPMDASTQALLDRSKRLHNRKRDFVNERVVERNPYMRDVLRSTDRRDYDDVDEDLTSYRPRHYASSTLNRFPNTTIRKSNNYDYLSPSSDYLSRRSYIPSASATSSYYPSTTRSSHLSDLFRRRSPASGTVSALSGYGNKESCIGLALDRVGHLIESKCTWVRSTKVQTESESTSPDEVELNSATEISTDSEFDNDEIIRQAPKIFIDDTHLRKPTKVQIKSTMIGPNAASAGLHQKQLAAREKGGSYLQKYQPQPPLPQFKPLVQVDPTLLIGSQRAPLQNPRPGDYLLNKTASTEGIASKKSLELKKRYLLGEPANGNKIQKSGSTSVLDSRIRSFQSNISECQKLLNPSSDISAGMRTFLDRTKLGEGSQTTPGQTNELIRSATSNVINDLRVELRIQKTGSSHSTDNEKENVFVNCKNELNKGMEYTDAVNATLLDQLARKSSPTTPTNKTVVEVIDLVTPEKPIDIIDLTALETPKKQLVDGSAMDVDERLTPDSNKISELQQEVKEEPKPDVSRDVKECIPDILGHIKEGTGSKEPGGEDQQSLLEQSDEEKRDSPEKDVAEHELYEPDSVQIQVPNIPWEKSKPEVMSTTGSSGSICSSSDSSSIEDIQHYILESTTSPDTQTVGGKHNVPRLEVHDTSGALMQVDSLMIVNGKYIGDPEDVKFLDMPANVIVPPAPALKTNELDMEDDQEAEAEPVTATPEPVECTVIEAERRVTAPPPLPEMGPPKLKFDSKNENKIESLKNLPLIVESNVEHSQAVKPITLNLSNLARTPDTPTTPTAHDSDKTPTGEILSRGSDSETEHTGTGQVLTETELSDWTADDCISENFVDLEFALNSNKGTIKRRKDRRRSGASKLPSGNEVIHELARQAPVVQMDGILSAIDIDDIEFMDTGSEGSCAEAYSATNTALIQNRGYMEYIEAEPKKTTRKAAPPSSYPGNLPPLMTKRDEKLGVDYIEQGAYIMHDDAKTPVNEVAPAMTQSLTDSITLNELDDDSMIISQTQPTTTEESEALTVVTSPLDTSSPRVLDQFASMLAAGKGDSTPSSSEQQPKTSTVTSSSTGPNSSTTGNVSKEPQEEDLQIQFEYVRALQQRISQISTQRRKSSKGEAPNLQLNSSAPVIESAEDPAKPAEEPLVSMRPRTTSISGKVPEIPTLSSKLEEITKERTKQKDLIHDLVMDKLQSKKQLNAEKRLHRSRQRSLLTSGYASGSSLSPTPKLAAACSPQDSNCSSQAHYHASTAEEAPKPPAERPLQKSATSTYVSPYRTVQAPTRSADLYKPRPFSEHIDSNALAGYKLGKTASFNGGKLGDFAKPIAPARVNRGGGVATADIANISASTENLRSEARARARLKSNTELGLSPEEKMQLIRSRLHYDQNRSLKPKQLEEMPSGDLAARARKMSASKSVNDLAYMVGQQQQQQVEKDAVLQAKAADFTSDPNLASGGQEKAGKTKSGRRPKDPERRKSLIQSLSSFFQKGSGSAASSSKEQGGAVAAVHSEQSERPGTSSSGTPTISDAAGGGGGGGGVFSRFRISPKSKEKSKSCFDLRNFGFGDKDMLVCNAASPAGATSASQKNHSQEYLNTTNNSRYRKQTNTAKPKPESFSSSSPQLYIHKPHHLAAAHPSALDDQTPPPIPPLPLNYQRSDDESYANETREHKKQRAISKASRQAELKRLRIAQEIQREQEEIEVQLKDLEARGVLIEKALRGEAQNIENLDATKDNDEKLLKELLEIWRNITALKKRDEELTIRQQELQLEYRHAQLKEELNLRLSCNKLDKSSADVAAEGAILNEMLEIVAKRAALRPTASQLDLTAAGSASTSAEATGIKLTGQPHDHEESII</sequence>
<accession>Q86BA1</accession>
<accession>B7Z0U5</accession>
<accession>F2FB99</accession>
<accession>Q86BA2</accession>
<accession>Q86BA3</accession>
<accession>Q8MTA1</accession>
<accession>Q8MUJ8</accession>
<accession>Q8MUJ9</accession>
<accession>Q8MUK0</accession>
<accession>Q9VH41</accession>
<reference key="1">
    <citation type="journal article" date="2002" name="Cell">
        <title>MICALs, a family of conserved flavoprotein oxidoreductases, function in plexin-mediated axonal repulsion.</title>
        <authorList>
            <person name="Terman J.R."/>
            <person name="Mao T."/>
            <person name="Pasterkamp R.J."/>
            <person name="Yu H.-H."/>
            <person name="Kolodkin A.L."/>
        </authorList>
    </citation>
    <scope>NUCLEOTIDE SEQUENCE [MRNA] (ISOFORMS B; C AND E)</scope>
    <scope>FUNCTION</scope>
    <scope>COFACTOR</scope>
    <scope>DISRUPTION PHENOTYPE</scope>
    <scope>TISSUE SPECIFICITY</scope>
    <scope>DEVELOPMENTAL STAGE</scope>
    <scope>INTERACTION WITH PLEXA</scope>
    <scope>MUTAGENESIS OF 134-GLY--GLY-139</scope>
</reference>
<reference key="2">
    <citation type="journal article" date="2000" name="Science">
        <title>The genome sequence of Drosophila melanogaster.</title>
        <authorList>
            <person name="Adams M.D."/>
            <person name="Celniker S.E."/>
            <person name="Holt R.A."/>
            <person name="Evans C.A."/>
            <person name="Gocayne J.D."/>
            <person name="Amanatides P.G."/>
            <person name="Scherer S.E."/>
            <person name="Li P.W."/>
            <person name="Hoskins R.A."/>
            <person name="Galle R.F."/>
            <person name="George R.A."/>
            <person name="Lewis S.E."/>
            <person name="Richards S."/>
            <person name="Ashburner M."/>
            <person name="Henderson S.N."/>
            <person name="Sutton G.G."/>
            <person name="Wortman J.R."/>
            <person name="Yandell M.D."/>
            <person name="Zhang Q."/>
            <person name="Chen L.X."/>
            <person name="Brandon R.C."/>
            <person name="Rogers Y.-H.C."/>
            <person name="Blazej R.G."/>
            <person name="Champe M."/>
            <person name="Pfeiffer B.D."/>
            <person name="Wan K.H."/>
            <person name="Doyle C."/>
            <person name="Baxter E.G."/>
            <person name="Helt G."/>
            <person name="Nelson C.R."/>
            <person name="Miklos G.L.G."/>
            <person name="Abril J.F."/>
            <person name="Agbayani A."/>
            <person name="An H.-J."/>
            <person name="Andrews-Pfannkoch C."/>
            <person name="Baldwin D."/>
            <person name="Ballew R.M."/>
            <person name="Basu A."/>
            <person name="Baxendale J."/>
            <person name="Bayraktaroglu L."/>
            <person name="Beasley E.M."/>
            <person name="Beeson K.Y."/>
            <person name="Benos P.V."/>
            <person name="Berman B.P."/>
            <person name="Bhandari D."/>
            <person name="Bolshakov S."/>
            <person name="Borkova D."/>
            <person name="Botchan M.R."/>
            <person name="Bouck J."/>
            <person name="Brokstein P."/>
            <person name="Brottier P."/>
            <person name="Burtis K.C."/>
            <person name="Busam D.A."/>
            <person name="Butler H."/>
            <person name="Cadieu E."/>
            <person name="Center A."/>
            <person name="Chandra I."/>
            <person name="Cherry J.M."/>
            <person name="Cawley S."/>
            <person name="Dahlke C."/>
            <person name="Davenport L.B."/>
            <person name="Davies P."/>
            <person name="de Pablos B."/>
            <person name="Delcher A."/>
            <person name="Deng Z."/>
            <person name="Mays A.D."/>
            <person name="Dew I."/>
            <person name="Dietz S.M."/>
            <person name="Dodson K."/>
            <person name="Doup L.E."/>
            <person name="Downes M."/>
            <person name="Dugan-Rocha S."/>
            <person name="Dunkov B.C."/>
            <person name="Dunn P."/>
            <person name="Durbin K.J."/>
            <person name="Evangelista C.C."/>
            <person name="Ferraz C."/>
            <person name="Ferriera S."/>
            <person name="Fleischmann W."/>
            <person name="Fosler C."/>
            <person name="Gabrielian A.E."/>
            <person name="Garg N.S."/>
            <person name="Gelbart W.M."/>
            <person name="Glasser K."/>
            <person name="Glodek A."/>
            <person name="Gong F."/>
            <person name="Gorrell J.H."/>
            <person name="Gu Z."/>
            <person name="Guan P."/>
            <person name="Harris M."/>
            <person name="Harris N.L."/>
            <person name="Harvey D.A."/>
            <person name="Heiman T.J."/>
            <person name="Hernandez J.R."/>
            <person name="Houck J."/>
            <person name="Hostin D."/>
            <person name="Houston K.A."/>
            <person name="Howland T.J."/>
            <person name="Wei M.-H."/>
            <person name="Ibegwam C."/>
            <person name="Jalali M."/>
            <person name="Kalush F."/>
            <person name="Karpen G.H."/>
            <person name="Ke Z."/>
            <person name="Kennison J.A."/>
            <person name="Ketchum K.A."/>
            <person name="Kimmel B.E."/>
            <person name="Kodira C.D."/>
            <person name="Kraft C.L."/>
            <person name="Kravitz S."/>
            <person name="Kulp D."/>
            <person name="Lai Z."/>
            <person name="Lasko P."/>
            <person name="Lei Y."/>
            <person name="Levitsky A.A."/>
            <person name="Li J.H."/>
            <person name="Li Z."/>
            <person name="Liang Y."/>
            <person name="Lin X."/>
            <person name="Liu X."/>
            <person name="Mattei B."/>
            <person name="McIntosh T.C."/>
            <person name="McLeod M.P."/>
            <person name="McPherson D."/>
            <person name="Merkulov G."/>
            <person name="Milshina N.V."/>
            <person name="Mobarry C."/>
            <person name="Morris J."/>
            <person name="Moshrefi A."/>
            <person name="Mount S.M."/>
            <person name="Moy M."/>
            <person name="Murphy B."/>
            <person name="Murphy L."/>
            <person name="Muzny D.M."/>
            <person name="Nelson D.L."/>
            <person name="Nelson D.R."/>
            <person name="Nelson K.A."/>
            <person name="Nixon K."/>
            <person name="Nusskern D.R."/>
            <person name="Pacleb J.M."/>
            <person name="Palazzolo M."/>
            <person name="Pittman G.S."/>
            <person name="Pan S."/>
            <person name="Pollard J."/>
            <person name="Puri V."/>
            <person name="Reese M.G."/>
            <person name="Reinert K."/>
            <person name="Remington K."/>
            <person name="Saunders R.D.C."/>
            <person name="Scheeler F."/>
            <person name="Shen H."/>
            <person name="Shue B.C."/>
            <person name="Siden-Kiamos I."/>
            <person name="Simpson M."/>
            <person name="Skupski M.P."/>
            <person name="Smith T.J."/>
            <person name="Spier E."/>
            <person name="Spradling A.C."/>
            <person name="Stapleton M."/>
            <person name="Strong R."/>
            <person name="Sun E."/>
            <person name="Svirskas R."/>
            <person name="Tector C."/>
            <person name="Turner R."/>
            <person name="Venter E."/>
            <person name="Wang A.H."/>
            <person name="Wang X."/>
            <person name="Wang Z.-Y."/>
            <person name="Wassarman D.A."/>
            <person name="Weinstock G.M."/>
            <person name="Weissenbach J."/>
            <person name="Williams S.M."/>
            <person name="Woodage T."/>
            <person name="Worley K.C."/>
            <person name="Wu D."/>
            <person name="Yang S."/>
            <person name="Yao Q.A."/>
            <person name="Ye J."/>
            <person name="Yeh R.-F."/>
            <person name="Zaveri J.S."/>
            <person name="Zhan M."/>
            <person name="Zhang G."/>
            <person name="Zhao Q."/>
            <person name="Zheng L."/>
            <person name="Zheng X.H."/>
            <person name="Zhong F.N."/>
            <person name="Zhong W."/>
            <person name="Zhou X."/>
            <person name="Zhu S.C."/>
            <person name="Zhu X."/>
            <person name="Smith H.O."/>
            <person name="Gibbs R.A."/>
            <person name="Myers E.W."/>
            <person name="Rubin G.M."/>
            <person name="Venter J.C."/>
        </authorList>
    </citation>
    <scope>NUCLEOTIDE SEQUENCE [LARGE SCALE GENOMIC DNA]</scope>
    <source>
        <strain>Berkeley</strain>
    </source>
</reference>
<reference key="3">
    <citation type="journal article" date="2002" name="Genome Biol.">
        <title>Annotation of the Drosophila melanogaster euchromatic genome: a systematic review.</title>
        <authorList>
            <person name="Misra S."/>
            <person name="Crosby M.A."/>
            <person name="Mungall C.J."/>
            <person name="Matthews B.B."/>
            <person name="Campbell K.S."/>
            <person name="Hradecky P."/>
            <person name="Huang Y."/>
            <person name="Kaminker J.S."/>
            <person name="Millburn G.H."/>
            <person name="Prochnik S.E."/>
            <person name="Smith C.D."/>
            <person name="Tupy J.L."/>
            <person name="Whitfield E.J."/>
            <person name="Bayraktaroglu L."/>
            <person name="Berman B.P."/>
            <person name="Bettencourt B.R."/>
            <person name="Celniker S.E."/>
            <person name="de Grey A.D.N.J."/>
            <person name="Drysdale R.A."/>
            <person name="Harris N.L."/>
            <person name="Richter J."/>
            <person name="Russo S."/>
            <person name="Schroeder A.J."/>
            <person name="Shu S.Q."/>
            <person name="Stapleton M."/>
            <person name="Yamada C."/>
            <person name="Ashburner M."/>
            <person name="Gelbart W.M."/>
            <person name="Rubin G.M."/>
            <person name="Lewis S.E."/>
        </authorList>
    </citation>
    <scope>GENOME REANNOTATION</scope>
    <source>
        <strain>Berkeley</strain>
    </source>
</reference>
<reference key="4">
    <citation type="journal article" date="2002" name="Genome Biol.">
        <title>A Drosophila full-length cDNA resource.</title>
        <authorList>
            <person name="Stapleton M."/>
            <person name="Carlson J.W."/>
            <person name="Brokstein P."/>
            <person name="Yu C."/>
            <person name="Champe M."/>
            <person name="George R.A."/>
            <person name="Guarin H."/>
            <person name="Kronmiller B."/>
            <person name="Pacleb J.M."/>
            <person name="Park S."/>
            <person name="Wan K.H."/>
            <person name="Rubin G.M."/>
            <person name="Celniker S.E."/>
        </authorList>
    </citation>
    <scope>NUCLEOTIDE SEQUENCE [LARGE SCALE MRNA] (ISOFORM A)</scope>
    <source>
        <strain>Berkeley</strain>
        <tissue>Testis</tissue>
    </source>
</reference>
<reference key="5">
    <citation type="submission" date="2011-03" db="EMBL/GenBank/DDBJ databases">
        <authorList>
            <person name="Carlson J."/>
            <person name="Booth B."/>
            <person name="Frise E."/>
            <person name="Park S."/>
            <person name="Wan K."/>
            <person name="Yu C."/>
            <person name="Celniker S."/>
        </authorList>
    </citation>
    <scope>NUCLEOTIDE SEQUENCE [LARGE SCALE MRNA] (ISOFORM I)</scope>
    <source>
        <strain>Berkeley</strain>
        <tissue>Head</tissue>
    </source>
</reference>
<reference key="6">
    <citation type="journal article" date="2008" name="J. Proteome Res.">
        <title>Phosphoproteome analysis of Drosophila melanogaster embryos.</title>
        <authorList>
            <person name="Zhai B."/>
            <person name="Villen J."/>
            <person name="Beausoleil S.A."/>
            <person name="Mintseris J."/>
            <person name="Gygi S.P."/>
        </authorList>
    </citation>
    <scope>PHOSPHORYLATION [LARGE SCALE ANALYSIS] AT THR-1049; SER-1194; SER-1199; SER-1212; SER-4349; SER-4353 AND SER-4426</scope>
    <scope>IDENTIFICATION BY MASS SPECTROMETRY</scope>
    <source>
        <tissue>Embryo</tissue>
    </source>
</reference>
<reference key="7">
    <citation type="journal article" date="2009" name="Nat. Neurosci.">
        <title>A genetic pathway composed of Sox14 and Mical governs severing of dendrites during pruning.</title>
        <authorList>
            <person name="Kirilly D."/>
            <person name="Gu Y."/>
            <person name="Huang Y."/>
            <person name="Wu Z."/>
            <person name="Bashirullah A."/>
            <person name="Low B.C."/>
            <person name="Kolodkin A.L."/>
            <person name="Wang H."/>
            <person name="Yu F."/>
        </authorList>
    </citation>
    <scope>INDUCTION</scope>
</reference>
<reference key="8">
    <citation type="journal article" date="2010" name="Nature">
        <title>Mical links semaphorins to F-actin disassembly.</title>
        <authorList>
            <person name="Hung R.J."/>
            <person name="Yazdani U."/>
            <person name="Yoon J."/>
            <person name="Wu H."/>
            <person name="Yang T."/>
            <person name="Gupta N."/>
            <person name="Huang Z."/>
            <person name="van Berkel W.J."/>
            <person name="Terman J.R."/>
        </authorList>
    </citation>
    <scope>FUNCTION</scope>
    <scope>DISRUPTION PHENOTYPE</scope>
</reference>
<reference key="9">
    <citation type="journal article" date="2011" name="Science">
        <title>Direct redox regulation of F-actin assembly and disassembly by Mical.</title>
        <authorList>
            <person name="Hung R.J."/>
            <person name="Pak C.W."/>
            <person name="Terman J.R."/>
        </authorList>
    </citation>
    <scope>FUNCTION</scope>
    <scope>COFACTOR</scope>
    <scope>CATALYTIC ACTIVITY</scope>
    <scope>CAUTION</scope>
</reference>
<reference key="10">
    <citation type="journal article" date="2013" name="Nat. Cell Biol.">
        <title>SelR reverses Mical-mediated oxidation of actin to regulate F-actin dynamics.</title>
        <authorList>
            <person name="Hung R.J."/>
            <person name="Spaeth C.S."/>
            <person name="Yesilyurt H.G."/>
            <person name="Terman J.R."/>
        </authorList>
    </citation>
    <scope>FUNCTION</scope>
</reference>
<evidence type="ECO:0000250" key="1"/>
<evidence type="ECO:0000250" key="2">
    <source>
        <dbReference type="UniProtKB" id="Q8TDZ2"/>
    </source>
</evidence>
<evidence type="ECO:0000250" key="3">
    <source>
        <dbReference type="UniProtKB" id="Q8VDP3"/>
    </source>
</evidence>
<evidence type="ECO:0000255" key="4">
    <source>
        <dbReference type="PROSITE-ProRule" id="PRU00044"/>
    </source>
</evidence>
<evidence type="ECO:0000255" key="5">
    <source>
        <dbReference type="PROSITE-ProRule" id="PRU00125"/>
    </source>
</evidence>
<evidence type="ECO:0000255" key="6">
    <source>
        <dbReference type="PROSITE-ProRule" id="PRU01195"/>
    </source>
</evidence>
<evidence type="ECO:0000256" key="7">
    <source>
        <dbReference type="SAM" id="MobiDB-lite"/>
    </source>
</evidence>
<evidence type="ECO:0000269" key="8">
    <source>
    </source>
</evidence>
<evidence type="ECO:0000269" key="9">
    <source>
    </source>
</evidence>
<evidence type="ECO:0000269" key="10">
    <source>
    </source>
</evidence>
<evidence type="ECO:0000269" key="11">
    <source>
    </source>
</evidence>
<evidence type="ECO:0000269" key="12">
    <source>
    </source>
</evidence>
<evidence type="ECO:0000269" key="13">
    <source>
    </source>
</evidence>
<evidence type="ECO:0000303" key="14">
    <source>
    </source>
</evidence>
<evidence type="ECO:0000303" key="15">
    <source>
    </source>
</evidence>
<evidence type="ECO:0000303" key="16">
    <source ref="5"/>
</evidence>
<evidence type="ECO:0000305" key="17"/>
<feature type="chain" id="PRO_0000416307" description="[F-actin]-monooxygenase Mical">
    <location>
        <begin position="1"/>
        <end position="4723"/>
    </location>
</feature>
<feature type="domain" description="Calponin-homology (CH)" evidence="4">
    <location>
        <begin position="562"/>
        <end position="669"/>
    </location>
</feature>
<feature type="domain" description="LIM zinc-binding" evidence="5">
    <location>
        <begin position="1072"/>
        <end position="1136"/>
    </location>
</feature>
<feature type="repeat" description="LRR 1">
    <location>
        <begin position="1297"/>
        <end position="1320"/>
    </location>
</feature>
<feature type="repeat" description="LRR 2">
    <location>
        <begin position="1579"/>
        <end position="1601"/>
    </location>
</feature>
<feature type="repeat" description="LRR 3">
    <location>
        <begin position="1730"/>
        <end position="1754"/>
    </location>
</feature>
<feature type="repeat" description="LRR 4">
    <location>
        <begin position="1931"/>
        <end position="1956"/>
    </location>
</feature>
<feature type="repeat" description="LRR 5">
    <location>
        <begin position="2548"/>
        <end position="2574"/>
    </location>
</feature>
<feature type="repeat" description="LRR 6">
    <location>
        <begin position="2680"/>
        <end position="2704"/>
    </location>
</feature>
<feature type="repeat" description="LRR 7">
    <location>
        <begin position="2934"/>
        <end position="2957"/>
    </location>
</feature>
<feature type="repeat" description="LRR 8">
    <location>
        <begin position="3545"/>
        <end position="3568"/>
    </location>
</feature>
<feature type="repeat" description="LRR 9">
    <location>
        <begin position="3642"/>
        <end position="3665"/>
    </location>
</feature>
<feature type="domain" description="bMERB" evidence="6">
    <location>
        <begin position="4550"/>
        <end position="4705"/>
    </location>
</feature>
<feature type="repeat" description="LRR 10">
    <location>
        <begin position="4646"/>
        <end position="4668"/>
    </location>
</feature>
<feature type="region of interest" description="Monooxygenase domain">
    <location>
        <begin position="1"/>
        <end position="520"/>
    </location>
</feature>
<feature type="region of interest" description="Disordered" evidence="7">
    <location>
        <begin position="1"/>
        <end position="36"/>
    </location>
</feature>
<feature type="region of interest" description="Disordered" evidence="7">
    <location>
        <begin position="746"/>
        <end position="795"/>
    </location>
</feature>
<feature type="region of interest" description="Disordered" evidence="7">
    <location>
        <begin position="948"/>
        <end position="993"/>
    </location>
</feature>
<feature type="region of interest" description="Disordered" evidence="7">
    <location>
        <begin position="1026"/>
        <end position="1053"/>
    </location>
</feature>
<feature type="region of interest" description="Disordered" evidence="7">
    <location>
        <begin position="1130"/>
        <end position="1182"/>
    </location>
</feature>
<feature type="region of interest" description="Disordered" evidence="7">
    <location>
        <begin position="1212"/>
        <end position="1378"/>
    </location>
</feature>
<feature type="region of interest" description="Disordered" evidence="7">
    <location>
        <begin position="1434"/>
        <end position="1591"/>
    </location>
</feature>
<feature type="region of interest" description="Disordered" evidence="7">
    <location>
        <begin position="1614"/>
        <end position="1648"/>
    </location>
</feature>
<feature type="region of interest" description="Disordered" evidence="7">
    <location>
        <begin position="1684"/>
        <end position="1781"/>
    </location>
</feature>
<feature type="region of interest" description="Disordered" evidence="7">
    <location>
        <begin position="1797"/>
        <end position="1825"/>
    </location>
</feature>
<feature type="region of interest" description="Disordered" evidence="7">
    <location>
        <begin position="1992"/>
        <end position="2013"/>
    </location>
</feature>
<feature type="region of interest" description="Disordered" evidence="7">
    <location>
        <begin position="2028"/>
        <end position="2092"/>
    </location>
</feature>
<feature type="region of interest" description="Disordered" evidence="7">
    <location>
        <begin position="2145"/>
        <end position="2172"/>
    </location>
</feature>
<feature type="region of interest" description="Disordered" evidence="7">
    <location>
        <begin position="2329"/>
        <end position="2379"/>
    </location>
</feature>
<feature type="region of interest" description="Disordered" evidence="7">
    <location>
        <begin position="2418"/>
        <end position="2549"/>
    </location>
</feature>
<feature type="region of interest" description="Disordered" evidence="7">
    <location>
        <begin position="2604"/>
        <end position="2676"/>
    </location>
</feature>
<feature type="region of interest" description="Disordered" evidence="7">
    <location>
        <begin position="2699"/>
        <end position="2866"/>
    </location>
</feature>
<feature type="region of interest" description="Disordered" evidence="7">
    <location>
        <begin position="3411"/>
        <end position="3456"/>
    </location>
</feature>
<feature type="region of interest" description="Disordered" evidence="7">
    <location>
        <begin position="3468"/>
        <end position="3488"/>
    </location>
</feature>
<feature type="region of interest" description="Disordered" evidence="7">
    <location>
        <begin position="3655"/>
        <end position="3694"/>
    </location>
</feature>
<feature type="region of interest" description="Disordered" evidence="7">
    <location>
        <begin position="3809"/>
        <end position="3830"/>
    </location>
</feature>
<feature type="region of interest" description="Disordered" evidence="7">
    <location>
        <begin position="3888"/>
        <end position="3909"/>
    </location>
</feature>
<feature type="region of interest" description="Disordered" evidence="7">
    <location>
        <begin position="3922"/>
        <end position="3962"/>
    </location>
</feature>
<feature type="region of interest" description="Disordered" evidence="7">
    <location>
        <begin position="3983"/>
        <end position="4037"/>
    </location>
</feature>
<feature type="region of interest" description="Disordered" evidence="7">
    <location>
        <begin position="4072"/>
        <end position="4150"/>
    </location>
</feature>
<feature type="region of interest" description="Disordered" evidence="7">
    <location>
        <begin position="4260"/>
        <end position="4284"/>
    </location>
</feature>
<feature type="region of interest" description="Disordered" evidence="7">
    <location>
        <begin position="4317"/>
        <end position="4347"/>
    </location>
</feature>
<feature type="region of interest" description="Disordered" evidence="7">
    <location>
        <begin position="4360"/>
        <end position="4414"/>
    </location>
</feature>
<feature type="region of interest" description="Disordered" evidence="7">
    <location>
        <begin position="4449"/>
        <end position="4492"/>
    </location>
</feature>
<feature type="region of interest" description="Disordered" evidence="7">
    <location>
        <begin position="4505"/>
        <end position="4544"/>
    </location>
</feature>
<feature type="region of interest" description="Disordered" evidence="7">
    <location>
        <begin position="4704"/>
        <end position="4723"/>
    </location>
</feature>
<feature type="compositionally biased region" description="Basic residues" evidence="7">
    <location>
        <begin position="1"/>
        <end position="16"/>
    </location>
</feature>
<feature type="compositionally biased region" description="Low complexity" evidence="7">
    <location>
        <begin position="20"/>
        <end position="36"/>
    </location>
</feature>
<feature type="compositionally biased region" description="Low complexity" evidence="7">
    <location>
        <begin position="753"/>
        <end position="769"/>
    </location>
</feature>
<feature type="compositionally biased region" description="Basic and acidic residues" evidence="7">
    <location>
        <begin position="783"/>
        <end position="795"/>
    </location>
</feature>
<feature type="compositionally biased region" description="Basic and acidic residues" evidence="7">
    <location>
        <begin position="948"/>
        <end position="966"/>
    </location>
</feature>
<feature type="compositionally biased region" description="Basic and acidic residues" evidence="7">
    <location>
        <begin position="980"/>
        <end position="993"/>
    </location>
</feature>
<feature type="compositionally biased region" description="Basic and acidic residues" evidence="7">
    <location>
        <begin position="1028"/>
        <end position="1039"/>
    </location>
</feature>
<feature type="compositionally biased region" description="Low complexity" evidence="7">
    <location>
        <begin position="1219"/>
        <end position="1229"/>
    </location>
</feature>
<feature type="compositionally biased region" description="Acidic residues" evidence="7">
    <location>
        <begin position="1230"/>
        <end position="1248"/>
    </location>
</feature>
<feature type="compositionally biased region" description="Acidic residues" evidence="7">
    <location>
        <begin position="1269"/>
        <end position="1294"/>
    </location>
</feature>
<feature type="compositionally biased region" description="Basic and acidic residues" evidence="7">
    <location>
        <begin position="1295"/>
        <end position="1308"/>
    </location>
</feature>
<feature type="compositionally biased region" description="Basic and acidic residues" evidence="7">
    <location>
        <begin position="1322"/>
        <end position="1341"/>
    </location>
</feature>
<feature type="compositionally biased region" description="Polar residues" evidence="7">
    <location>
        <begin position="1342"/>
        <end position="1363"/>
    </location>
</feature>
<feature type="compositionally biased region" description="Basic and acidic residues" evidence="7">
    <location>
        <begin position="1365"/>
        <end position="1378"/>
    </location>
</feature>
<feature type="compositionally biased region" description="Basic and acidic residues" evidence="7">
    <location>
        <begin position="1483"/>
        <end position="1507"/>
    </location>
</feature>
<feature type="compositionally biased region" description="Polar residues" evidence="7">
    <location>
        <begin position="1516"/>
        <end position="1535"/>
    </location>
</feature>
<feature type="compositionally biased region" description="Acidic residues" evidence="7">
    <location>
        <begin position="1568"/>
        <end position="1578"/>
    </location>
</feature>
<feature type="compositionally biased region" description="Basic and acidic residues" evidence="7">
    <location>
        <begin position="1579"/>
        <end position="1591"/>
    </location>
</feature>
<feature type="compositionally biased region" description="Polar residues" evidence="7">
    <location>
        <begin position="1629"/>
        <end position="1648"/>
    </location>
</feature>
<feature type="compositionally biased region" description="Basic and acidic residues" evidence="7">
    <location>
        <begin position="1700"/>
        <end position="1721"/>
    </location>
</feature>
<feature type="compositionally biased region" description="Low complexity" evidence="7">
    <location>
        <begin position="1767"/>
        <end position="1781"/>
    </location>
</feature>
<feature type="compositionally biased region" description="Low complexity" evidence="7">
    <location>
        <begin position="1804"/>
        <end position="1814"/>
    </location>
</feature>
<feature type="compositionally biased region" description="Basic and acidic residues" evidence="7">
    <location>
        <begin position="1815"/>
        <end position="1825"/>
    </location>
</feature>
<feature type="compositionally biased region" description="Basic and acidic residues" evidence="7">
    <location>
        <begin position="1992"/>
        <end position="2009"/>
    </location>
</feature>
<feature type="compositionally biased region" description="Low complexity" evidence="7">
    <location>
        <begin position="2155"/>
        <end position="2169"/>
    </location>
</feature>
<feature type="compositionally biased region" description="Low complexity" evidence="7">
    <location>
        <begin position="2349"/>
        <end position="2358"/>
    </location>
</feature>
<feature type="compositionally biased region" description="Basic and acidic residues" evidence="7">
    <location>
        <begin position="2423"/>
        <end position="2450"/>
    </location>
</feature>
<feature type="compositionally biased region" description="Low complexity" evidence="7">
    <location>
        <begin position="2453"/>
        <end position="2476"/>
    </location>
</feature>
<feature type="compositionally biased region" description="Basic and acidic residues" evidence="7">
    <location>
        <begin position="2490"/>
        <end position="2502"/>
    </location>
</feature>
<feature type="compositionally biased region" description="Low complexity" evidence="7">
    <location>
        <begin position="2612"/>
        <end position="2623"/>
    </location>
</feature>
<feature type="compositionally biased region" description="Polar residues" evidence="7">
    <location>
        <begin position="2636"/>
        <end position="2648"/>
    </location>
</feature>
<feature type="compositionally biased region" description="Basic and acidic residues" evidence="7">
    <location>
        <begin position="2649"/>
        <end position="2664"/>
    </location>
</feature>
<feature type="compositionally biased region" description="Polar residues" evidence="7">
    <location>
        <begin position="2667"/>
        <end position="2676"/>
    </location>
</feature>
<feature type="compositionally biased region" description="Acidic residues" evidence="7">
    <location>
        <begin position="2739"/>
        <end position="2752"/>
    </location>
</feature>
<feature type="compositionally biased region" description="Basic and acidic residues" evidence="7">
    <location>
        <begin position="2777"/>
        <end position="2791"/>
    </location>
</feature>
<feature type="compositionally biased region" description="Low complexity" evidence="7">
    <location>
        <begin position="2846"/>
        <end position="2866"/>
    </location>
</feature>
<feature type="compositionally biased region" description="Basic and acidic residues" evidence="7">
    <location>
        <begin position="3435"/>
        <end position="3451"/>
    </location>
</feature>
<feature type="compositionally biased region" description="Low complexity" evidence="7">
    <location>
        <begin position="3474"/>
        <end position="3488"/>
    </location>
</feature>
<feature type="compositionally biased region" description="Polar residues" evidence="7">
    <location>
        <begin position="3900"/>
        <end position="3909"/>
    </location>
</feature>
<feature type="compositionally biased region" description="Polar residues" evidence="7">
    <location>
        <begin position="3927"/>
        <end position="3937"/>
    </location>
</feature>
<feature type="compositionally biased region" description="Low complexity" evidence="7">
    <location>
        <begin position="3938"/>
        <end position="3957"/>
    </location>
</feature>
<feature type="compositionally biased region" description="Polar residues" evidence="7">
    <location>
        <begin position="4084"/>
        <end position="4099"/>
    </location>
</feature>
<feature type="compositionally biased region" description="Polar residues" evidence="7">
    <location>
        <begin position="4109"/>
        <end position="4118"/>
    </location>
</feature>
<feature type="compositionally biased region" description="Basic and acidic residues" evidence="7">
    <location>
        <begin position="4127"/>
        <end position="4137"/>
    </location>
</feature>
<feature type="compositionally biased region" description="Basic and acidic residues" evidence="7">
    <location>
        <begin position="4260"/>
        <end position="4270"/>
    </location>
</feature>
<feature type="compositionally biased region" description="Low complexity" evidence="7">
    <location>
        <begin position="4360"/>
        <end position="4374"/>
    </location>
</feature>
<feature type="compositionally biased region" description="Low complexity" evidence="7">
    <location>
        <begin position="4387"/>
        <end position="4396"/>
    </location>
</feature>
<feature type="compositionally biased region" description="Gly residues" evidence="7">
    <location>
        <begin position="4401"/>
        <end position="4410"/>
    </location>
</feature>
<feature type="compositionally biased region" description="Polar residues" evidence="7">
    <location>
        <begin position="4450"/>
        <end position="4479"/>
    </location>
</feature>
<feature type="binding site" evidence="3">
    <location>
        <position position="138"/>
    </location>
    <ligand>
        <name>FAD</name>
        <dbReference type="ChEBI" id="CHEBI:57692"/>
    </ligand>
</feature>
<feature type="binding site" evidence="3">
    <location>
        <begin position="157"/>
        <end position="159"/>
    </location>
    <ligand>
        <name>FAD</name>
        <dbReference type="ChEBI" id="CHEBI:57692"/>
    </ligand>
</feature>
<feature type="binding site" evidence="3">
    <location>
        <begin position="164"/>
        <end position="166"/>
    </location>
    <ligand>
        <name>FAD</name>
        <dbReference type="ChEBI" id="CHEBI:57692"/>
    </ligand>
</feature>
<feature type="binding site" evidence="3">
    <location>
        <position position="224"/>
    </location>
    <ligand>
        <name>FAD</name>
        <dbReference type="ChEBI" id="CHEBI:57692"/>
    </ligand>
</feature>
<feature type="binding site" evidence="3">
    <location>
        <position position="334"/>
    </location>
    <ligand>
        <name>FAD</name>
        <dbReference type="ChEBI" id="CHEBI:57692"/>
    </ligand>
</feature>
<feature type="binding site" evidence="3">
    <location>
        <position position="434"/>
    </location>
    <ligand>
        <name>FAD</name>
        <dbReference type="ChEBI" id="CHEBI:57692"/>
    </ligand>
</feature>
<feature type="binding site" evidence="2">
    <location>
        <position position="1074"/>
    </location>
    <ligand>
        <name>Zn(2+)</name>
        <dbReference type="ChEBI" id="CHEBI:29105"/>
        <label>1</label>
    </ligand>
</feature>
<feature type="binding site" evidence="2">
    <location>
        <position position="1077"/>
    </location>
    <ligand>
        <name>Zn(2+)</name>
        <dbReference type="ChEBI" id="CHEBI:29105"/>
        <label>1</label>
    </ligand>
</feature>
<feature type="binding site" evidence="2">
    <location>
        <position position="1095"/>
    </location>
    <ligand>
        <name>Zn(2+)</name>
        <dbReference type="ChEBI" id="CHEBI:29105"/>
        <label>1</label>
    </ligand>
</feature>
<feature type="binding site" evidence="2">
    <location>
        <position position="1098"/>
    </location>
    <ligand>
        <name>Zn(2+)</name>
        <dbReference type="ChEBI" id="CHEBI:29105"/>
        <label>1</label>
    </ligand>
</feature>
<feature type="binding site" evidence="2">
    <location>
        <position position="1101"/>
    </location>
    <ligand>
        <name>Zn(2+)</name>
        <dbReference type="ChEBI" id="CHEBI:29105"/>
        <label>2</label>
    </ligand>
</feature>
<feature type="binding site" evidence="2">
    <location>
        <position position="1104"/>
    </location>
    <ligand>
        <name>Zn(2+)</name>
        <dbReference type="ChEBI" id="CHEBI:29105"/>
        <label>2</label>
    </ligand>
</feature>
<feature type="binding site" evidence="2">
    <location>
        <position position="1126"/>
    </location>
    <ligand>
        <name>Zn(2+)</name>
        <dbReference type="ChEBI" id="CHEBI:29105"/>
        <label>2</label>
    </ligand>
</feature>
<feature type="binding site" evidence="2">
    <location>
        <position position="1129"/>
    </location>
    <ligand>
        <name>Zn(2+)</name>
        <dbReference type="ChEBI" id="CHEBI:29105"/>
        <label>2</label>
    </ligand>
</feature>
<feature type="modified residue" description="Phosphothreonine" evidence="9">
    <location>
        <position position="1049"/>
    </location>
</feature>
<feature type="modified residue" description="Phosphoserine" evidence="9">
    <location>
        <position position="1194"/>
    </location>
</feature>
<feature type="modified residue" description="Phosphoserine" evidence="9">
    <location>
        <position position="1199"/>
    </location>
</feature>
<feature type="modified residue" description="Phosphoserine" evidence="9">
    <location>
        <position position="1212"/>
    </location>
</feature>
<feature type="modified residue" description="Phosphoserine" evidence="9">
    <location>
        <position position="4349"/>
    </location>
</feature>
<feature type="modified residue" description="Phosphoserine" evidence="9">
    <location>
        <position position="4353"/>
    </location>
</feature>
<feature type="modified residue" description="Phosphoserine" evidence="9">
    <location>
        <position position="4426"/>
    </location>
</feature>
<feature type="splice variant" id="VSP_042612" description="In isoform I." evidence="16">
    <original>QNDTPRRSKKRRQVDKTANI</original>
    <variation>LLKITILHHSLMENKFRSGC</variation>
    <location>
        <begin position="770"/>
        <end position="789"/>
    </location>
</feature>
<feature type="splice variant" id="VSP_042613" description="In isoform I." evidence="16">
    <location>
        <begin position="790"/>
        <end position="4723"/>
    </location>
</feature>
<feature type="splice variant" id="VSP_042614" description="In isoform E." evidence="14">
    <location>
        <begin position="790"/>
        <end position="1057"/>
    </location>
</feature>
<feature type="splice variant" id="VSP_042615" description="In isoform A." evidence="15">
    <original>EERQQRLQEIEENRQERMSKR</original>
    <variation>VSKCWHYFISWIGSYANVQKV</variation>
    <location>
        <begin position="790"/>
        <end position="810"/>
    </location>
</feature>
<feature type="splice variant" id="VSP_042616" description="In isoform A." evidence="15">
    <location>
        <begin position="811"/>
        <end position="4723"/>
    </location>
</feature>
<feature type="splice variant" id="VSP_042617" description="In isoform E and isoform B." evidence="14">
    <location>
        <begin position="1325"/>
        <end position="3045"/>
    </location>
</feature>
<feature type="mutagenesis site" description="Abolishes Monooxygenase activity and impairs axon guidance functions." evidence="8">
    <original>GAGPCG</original>
    <variation>WAWPCW</variation>
    <location>
        <begin position="134"/>
        <end position="139"/>
    </location>
</feature>
<feature type="sequence conflict" description="In Ref. 5; AEA30989." evidence="17" ref="5">
    <original>S</original>
    <variation>N</variation>
    <location>
        <position position="518"/>
    </location>
</feature>
<feature type="sequence conflict" description="In Ref. 5; AEA30989." evidence="17" ref="5">
    <original>Q</original>
    <variation>L</variation>
    <location>
        <position position="770"/>
    </location>
</feature>
<feature type="sequence conflict" description="In Ref. 1; AAM55243/AAM55244." evidence="17" ref="1">
    <original>Y</original>
    <variation>C</variation>
    <location>
        <position position="815"/>
    </location>
</feature>
<feature type="sequence conflict" description="In Ref. 1; AAM55244." evidence="17" ref="1">
    <original>L</original>
    <variation>P</variation>
    <location>
        <position position="1083"/>
    </location>
</feature>
<feature type="sequence conflict" description="In Ref. 1; AAM55244." evidence="17" ref="1">
    <original>F</original>
    <variation>L</variation>
    <location>
        <position position="1124"/>
    </location>
</feature>
<feature type="sequence conflict" description="In Ref. 1; AAM55244." evidence="17" ref="1">
    <original>E</original>
    <variation>Q</variation>
    <location>
        <position position="1187"/>
    </location>
</feature>
<feature type="sequence conflict" description="In Ref. 1; AAM55244." evidence="17" ref="1">
    <location>
        <begin position="1283"/>
        <end position="1285"/>
    </location>
</feature>
<feature type="sequence conflict" description="In Ref. 1; AAM55244." evidence="17" ref="1">
    <original>R</original>
    <variation>G</variation>
    <location>
        <position position="1339"/>
    </location>
</feature>
<feature type="sequence conflict" description="In Ref. 1; AAM55244." evidence="17" ref="1">
    <original>N</original>
    <variation>D</variation>
    <location>
        <position position="1373"/>
    </location>
</feature>
<feature type="sequence conflict" description="In Ref. 1; AAM55244." evidence="17" ref="1">
    <original>D</original>
    <variation>G</variation>
    <location>
        <position position="1414"/>
    </location>
</feature>
<feature type="sequence conflict" description="In Ref. 1; AAM55244." evidence="17" ref="1">
    <original>I</original>
    <variation>V</variation>
    <location>
        <position position="1543"/>
    </location>
</feature>
<feature type="sequence conflict" description="In Ref. 1; AAM55244." evidence="17" ref="1">
    <original>G</original>
    <variation>D</variation>
    <location>
        <position position="1556"/>
    </location>
</feature>
<feature type="sequence conflict" description="In Ref. 1; AAM55244." evidence="17" ref="1">
    <original>K</original>
    <variation>E</variation>
    <location>
        <position position="1782"/>
    </location>
</feature>
<feature type="sequence conflict" description="In Ref. 1; AAM55244." evidence="17" ref="1">
    <original>G</original>
    <variation>E</variation>
    <location>
        <position position="1870"/>
    </location>
</feature>
<feature type="sequence conflict" description="In Ref. 1; AAM55244." evidence="17" ref="1">
    <original>A</original>
    <variation>G</variation>
    <location>
        <position position="1931"/>
    </location>
</feature>
<feature type="sequence conflict" description="In Ref. 1; AAM55244." evidence="17" ref="1">
    <original>S</original>
    <variation>A</variation>
    <location>
        <position position="2001"/>
    </location>
</feature>
<feature type="sequence conflict" description="In Ref. 1; AAM55244." evidence="17" ref="1">
    <original>K</original>
    <variation>E</variation>
    <location>
        <position position="2366"/>
    </location>
</feature>
<feature type="sequence conflict" description="In Ref. 1; AAM55244." evidence="17" ref="1">
    <original>T</original>
    <variation>A</variation>
    <location>
        <position position="2485"/>
    </location>
</feature>
<feature type="sequence conflict" description="In Ref. 1; AAM55244." evidence="17" ref="1">
    <original>M</original>
    <variation>R</variation>
    <location>
        <position position="2500"/>
    </location>
</feature>
<feature type="sequence conflict" description="In Ref. 1; AAM55244." evidence="17" ref="1">
    <original>L</original>
    <variation>P</variation>
    <location>
        <position position="2802"/>
    </location>
</feature>
<feature type="sequence conflict" description="In Ref. 1; AAM55244." evidence="17" ref="1">
    <original>C</original>
    <variation>CVIS</variation>
    <location>
        <position position="3022"/>
    </location>
</feature>
<feature type="sequence conflict" description="In Ref. 1; AAM55242/AAM55243." evidence="17" ref="1">
    <original>P</original>
    <variation>S</variation>
    <location>
        <position position="3138"/>
    </location>
</feature>
<feature type="sequence conflict" description="In Ref. 1; AAM55244." evidence="17" ref="1">
    <original>K</original>
    <variation>R</variation>
    <location>
        <position position="3141"/>
    </location>
</feature>
<feature type="sequence conflict" description="In Ref. 1; AAM55244." evidence="17" ref="1">
    <original>E</original>
    <variation>G</variation>
    <location>
        <position position="3185"/>
    </location>
</feature>
<feature type="sequence conflict" description="In Ref. 1; AAM55242/AAM55243." evidence="17" ref="1">
    <original>N</original>
    <variation>D</variation>
    <location>
        <position position="3199"/>
    </location>
</feature>
<feature type="sequence conflict" description="In Ref. 1; AAM55242/AAM55243." evidence="17" ref="1">
    <original>G</original>
    <variation>D</variation>
    <location>
        <position position="3283"/>
    </location>
</feature>
<feature type="sequence conflict" description="In Ref. 1; AAM55242/AAM55243/AAM55244." evidence="17" ref="1">
    <original>S</original>
    <variation>P</variation>
    <location>
        <position position="3789"/>
    </location>
</feature>
<protein>
    <recommendedName>
        <fullName>[F-actin]-monooxygenase Mical</fullName>
        <ecNumber evidence="12">1.14.13.225</ecNumber>
    </recommendedName>
    <alternativeName>
        <fullName>Molecule interacting with CasL protein homolog</fullName>
    </alternativeName>
</protein>
<keyword id="KW-0009">Actin-binding</keyword>
<keyword id="KW-0025">Alternative splicing</keyword>
<keyword id="KW-0963">Cytoplasm</keyword>
<keyword id="KW-0274">FAD</keyword>
<keyword id="KW-0285">Flavoprotein</keyword>
<keyword id="KW-0433">Leucine-rich repeat</keyword>
<keyword id="KW-0440">LIM domain</keyword>
<keyword id="KW-0479">Metal-binding</keyword>
<keyword id="KW-0503">Monooxygenase</keyword>
<keyword id="KW-0521">NADP</keyword>
<keyword id="KW-0560">Oxidoreductase</keyword>
<keyword id="KW-0597">Phosphoprotein</keyword>
<keyword id="KW-1185">Reference proteome</keyword>
<keyword id="KW-0677">Repeat</keyword>
<keyword id="KW-0862">Zinc</keyword>